<organism>
    <name type="scientific">Syntrophomonas wolfei subsp. wolfei (strain DSM 2245B / Goettingen)</name>
    <dbReference type="NCBI Taxonomy" id="335541"/>
    <lineage>
        <taxon>Bacteria</taxon>
        <taxon>Bacillati</taxon>
        <taxon>Bacillota</taxon>
        <taxon>Clostridia</taxon>
        <taxon>Eubacteriales</taxon>
        <taxon>Syntrophomonadaceae</taxon>
        <taxon>Syntrophomonas</taxon>
    </lineage>
</organism>
<accession>Q0AUC8</accession>
<sequence length="72" mass="7122">MGVALGAGLAVSIAGIGGGIGMGIAGGKAFEAIARQPEVGGDVRTLLFITLAFIETLTIYGLLIAFMLVGKA</sequence>
<dbReference type="EMBL" id="CP000448">
    <property type="protein sequence ID" value="ABI69676.1"/>
    <property type="molecule type" value="Genomic_DNA"/>
</dbReference>
<dbReference type="RefSeq" id="WP_011641760.1">
    <property type="nucleotide sequence ID" value="NC_008346.1"/>
</dbReference>
<dbReference type="SMR" id="Q0AUC8"/>
<dbReference type="STRING" id="335541.Swol_2387"/>
<dbReference type="KEGG" id="swo:Swol_2387"/>
<dbReference type="eggNOG" id="COG0636">
    <property type="taxonomic scope" value="Bacteria"/>
</dbReference>
<dbReference type="HOGENOM" id="CLU_148047_2_0_9"/>
<dbReference type="OrthoDB" id="9810379at2"/>
<dbReference type="Proteomes" id="UP000001968">
    <property type="component" value="Chromosome"/>
</dbReference>
<dbReference type="GO" id="GO:0005886">
    <property type="term" value="C:plasma membrane"/>
    <property type="evidence" value="ECO:0007669"/>
    <property type="project" value="UniProtKB-SubCell"/>
</dbReference>
<dbReference type="GO" id="GO:0045259">
    <property type="term" value="C:proton-transporting ATP synthase complex"/>
    <property type="evidence" value="ECO:0007669"/>
    <property type="project" value="UniProtKB-KW"/>
</dbReference>
<dbReference type="GO" id="GO:0033177">
    <property type="term" value="C:proton-transporting two-sector ATPase complex, proton-transporting domain"/>
    <property type="evidence" value="ECO:0007669"/>
    <property type="project" value="InterPro"/>
</dbReference>
<dbReference type="GO" id="GO:0008289">
    <property type="term" value="F:lipid binding"/>
    <property type="evidence" value="ECO:0007669"/>
    <property type="project" value="UniProtKB-KW"/>
</dbReference>
<dbReference type="GO" id="GO:0046933">
    <property type="term" value="F:proton-transporting ATP synthase activity, rotational mechanism"/>
    <property type="evidence" value="ECO:0007669"/>
    <property type="project" value="UniProtKB-UniRule"/>
</dbReference>
<dbReference type="CDD" id="cd18121">
    <property type="entry name" value="ATP-synt_Fo_c"/>
    <property type="match status" value="1"/>
</dbReference>
<dbReference type="FunFam" id="1.20.20.10:FF:000002">
    <property type="entry name" value="ATP synthase subunit c"/>
    <property type="match status" value="1"/>
</dbReference>
<dbReference type="Gene3D" id="1.20.20.10">
    <property type="entry name" value="F1F0 ATP synthase subunit C"/>
    <property type="match status" value="1"/>
</dbReference>
<dbReference type="HAMAP" id="MF_01396">
    <property type="entry name" value="ATP_synth_c_bact"/>
    <property type="match status" value="1"/>
</dbReference>
<dbReference type="InterPro" id="IPR005953">
    <property type="entry name" value="ATP_synth_csu_bac/chlpt"/>
</dbReference>
<dbReference type="InterPro" id="IPR000454">
    <property type="entry name" value="ATP_synth_F0_csu"/>
</dbReference>
<dbReference type="InterPro" id="IPR020537">
    <property type="entry name" value="ATP_synth_F0_csu_DDCD_BS"/>
</dbReference>
<dbReference type="InterPro" id="IPR038662">
    <property type="entry name" value="ATP_synth_F0_csu_sf"/>
</dbReference>
<dbReference type="InterPro" id="IPR002379">
    <property type="entry name" value="ATPase_proteolipid_c-like_dom"/>
</dbReference>
<dbReference type="InterPro" id="IPR035921">
    <property type="entry name" value="F/V-ATP_Csub_sf"/>
</dbReference>
<dbReference type="NCBIfam" id="TIGR01260">
    <property type="entry name" value="ATP_synt_c"/>
    <property type="match status" value="1"/>
</dbReference>
<dbReference type="Pfam" id="PF00137">
    <property type="entry name" value="ATP-synt_C"/>
    <property type="match status" value="1"/>
</dbReference>
<dbReference type="PRINTS" id="PR00124">
    <property type="entry name" value="ATPASEC"/>
</dbReference>
<dbReference type="SUPFAM" id="SSF81333">
    <property type="entry name" value="F1F0 ATP synthase subunit C"/>
    <property type="match status" value="1"/>
</dbReference>
<dbReference type="PROSITE" id="PS00605">
    <property type="entry name" value="ATPASE_C"/>
    <property type="match status" value="1"/>
</dbReference>
<proteinExistence type="inferred from homology"/>
<protein>
    <recommendedName>
        <fullName evidence="1">ATP synthase subunit c</fullName>
    </recommendedName>
    <alternativeName>
        <fullName evidence="1">ATP synthase F(0) sector subunit c</fullName>
    </alternativeName>
    <alternativeName>
        <fullName evidence="1">F-type ATPase subunit c</fullName>
        <shortName evidence="1">F-ATPase subunit c</shortName>
    </alternativeName>
    <alternativeName>
        <fullName evidence="1">Lipid-binding protein</fullName>
    </alternativeName>
</protein>
<gene>
    <name evidence="1" type="primary">atpE</name>
    <name type="ordered locus">Swol_2387</name>
</gene>
<feature type="chain" id="PRO_0000365931" description="ATP synthase subunit c">
    <location>
        <begin position="1"/>
        <end position="72"/>
    </location>
</feature>
<feature type="transmembrane region" description="Helical" evidence="1">
    <location>
        <begin position="4"/>
        <end position="24"/>
    </location>
</feature>
<feature type="transmembrane region" description="Helical" evidence="1">
    <location>
        <begin position="46"/>
        <end position="66"/>
    </location>
</feature>
<feature type="site" description="Reversibly protonated during proton transport" evidence="1">
    <location>
        <position position="55"/>
    </location>
</feature>
<evidence type="ECO:0000255" key="1">
    <source>
        <dbReference type="HAMAP-Rule" id="MF_01396"/>
    </source>
</evidence>
<reference key="1">
    <citation type="journal article" date="2010" name="Environ. Microbiol.">
        <title>The genome of Syntrophomonas wolfei: new insights into syntrophic metabolism and biohydrogen production.</title>
        <authorList>
            <person name="Sieber J.R."/>
            <person name="Sims D.R."/>
            <person name="Han C."/>
            <person name="Kim E."/>
            <person name="Lykidis A."/>
            <person name="Lapidus A.L."/>
            <person name="McDonnald E."/>
            <person name="Rohlin L."/>
            <person name="Culley D.E."/>
            <person name="Gunsalus R."/>
            <person name="McInerney M.J."/>
        </authorList>
    </citation>
    <scope>NUCLEOTIDE SEQUENCE [LARGE SCALE GENOMIC DNA]</scope>
    <source>
        <strain>DSM 2245B / Goettingen</strain>
    </source>
</reference>
<comment type="function">
    <text evidence="1">F(1)F(0) ATP synthase produces ATP from ADP in the presence of a proton or sodium gradient. F-type ATPases consist of two structural domains, F(1) containing the extramembraneous catalytic core and F(0) containing the membrane proton channel, linked together by a central stalk and a peripheral stalk. During catalysis, ATP synthesis in the catalytic domain of F(1) is coupled via a rotary mechanism of the central stalk subunits to proton translocation.</text>
</comment>
<comment type="function">
    <text evidence="1">Key component of the F(0) channel; it plays a direct role in translocation across the membrane. A homomeric c-ring of between 10-14 subunits forms the central stalk rotor element with the F(1) delta and epsilon subunits.</text>
</comment>
<comment type="subunit">
    <text evidence="1">F-type ATPases have 2 components, F(1) - the catalytic core - and F(0) - the membrane proton channel. F(1) has five subunits: alpha(3), beta(3), gamma(1), delta(1), epsilon(1). F(0) has three main subunits: a(1), b(2) and c(10-14). The alpha and beta chains form an alternating ring which encloses part of the gamma chain. F(1) is attached to F(0) by a central stalk formed by the gamma and epsilon chains, while a peripheral stalk is formed by the delta and b chains.</text>
</comment>
<comment type="subcellular location">
    <subcellularLocation>
        <location evidence="1">Cell membrane</location>
        <topology evidence="1">Multi-pass membrane protein</topology>
    </subcellularLocation>
</comment>
<comment type="similarity">
    <text evidence="1">Belongs to the ATPase C chain family.</text>
</comment>
<name>ATPL_SYNWW</name>
<keyword id="KW-0066">ATP synthesis</keyword>
<keyword id="KW-1003">Cell membrane</keyword>
<keyword id="KW-0138">CF(0)</keyword>
<keyword id="KW-0375">Hydrogen ion transport</keyword>
<keyword id="KW-0406">Ion transport</keyword>
<keyword id="KW-0446">Lipid-binding</keyword>
<keyword id="KW-0472">Membrane</keyword>
<keyword id="KW-1185">Reference proteome</keyword>
<keyword id="KW-0812">Transmembrane</keyword>
<keyword id="KW-1133">Transmembrane helix</keyword>
<keyword id="KW-0813">Transport</keyword>